<feature type="chain" id="PRO_0000190308" description="Recombination protein RecR">
    <location>
        <begin position="1"/>
        <end position="198"/>
    </location>
</feature>
<feature type="domain" description="Toprim" evidence="1">
    <location>
        <begin position="81"/>
        <end position="175"/>
    </location>
</feature>
<feature type="zinc finger region" description="C4-type" evidence="1">
    <location>
        <begin position="58"/>
        <end position="73"/>
    </location>
</feature>
<accession>Q97MR4</accession>
<gene>
    <name evidence="1" type="primary">recR</name>
    <name type="ordered locus">CA_C0127</name>
</gene>
<dbReference type="EMBL" id="AE001437">
    <property type="protein sequence ID" value="AAK78112.1"/>
    <property type="molecule type" value="Genomic_DNA"/>
</dbReference>
<dbReference type="PIR" id="E96915">
    <property type="entry name" value="E96915"/>
</dbReference>
<dbReference type="RefSeq" id="NP_346772.1">
    <property type="nucleotide sequence ID" value="NC_003030.1"/>
</dbReference>
<dbReference type="RefSeq" id="WP_010963454.1">
    <property type="nucleotide sequence ID" value="NC_003030.1"/>
</dbReference>
<dbReference type="SMR" id="Q97MR4"/>
<dbReference type="STRING" id="272562.CA_C0127"/>
<dbReference type="GeneID" id="44996611"/>
<dbReference type="KEGG" id="cac:CA_C0127"/>
<dbReference type="PATRIC" id="fig|272562.8.peg.311"/>
<dbReference type="eggNOG" id="COG0353">
    <property type="taxonomic scope" value="Bacteria"/>
</dbReference>
<dbReference type="HOGENOM" id="CLU_060739_1_0_9"/>
<dbReference type="OrthoDB" id="9802672at2"/>
<dbReference type="Proteomes" id="UP000000814">
    <property type="component" value="Chromosome"/>
</dbReference>
<dbReference type="GO" id="GO:0003677">
    <property type="term" value="F:DNA binding"/>
    <property type="evidence" value="ECO:0007669"/>
    <property type="project" value="UniProtKB-UniRule"/>
</dbReference>
<dbReference type="GO" id="GO:0008270">
    <property type="term" value="F:zinc ion binding"/>
    <property type="evidence" value="ECO:0007669"/>
    <property type="project" value="UniProtKB-KW"/>
</dbReference>
<dbReference type="GO" id="GO:0006310">
    <property type="term" value="P:DNA recombination"/>
    <property type="evidence" value="ECO:0007669"/>
    <property type="project" value="UniProtKB-UniRule"/>
</dbReference>
<dbReference type="GO" id="GO:0006281">
    <property type="term" value="P:DNA repair"/>
    <property type="evidence" value="ECO:0007669"/>
    <property type="project" value="UniProtKB-UniRule"/>
</dbReference>
<dbReference type="CDD" id="cd01025">
    <property type="entry name" value="TOPRIM_recR"/>
    <property type="match status" value="1"/>
</dbReference>
<dbReference type="Gene3D" id="3.30.60.80">
    <property type="match status" value="1"/>
</dbReference>
<dbReference type="Gene3D" id="3.40.1360.10">
    <property type="match status" value="1"/>
</dbReference>
<dbReference type="Gene3D" id="6.10.250.240">
    <property type="match status" value="1"/>
</dbReference>
<dbReference type="Gene3D" id="1.10.8.420">
    <property type="entry name" value="RecR Domain 1"/>
    <property type="match status" value="1"/>
</dbReference>
<dbReference type="HAMAP" id="MF_00017">
    <property type="entry name" value="RecR"/>
    <property type="match status" value="1"/>
</dbReference>
<dbReference type="InterPro" id="IPR000093">
    <property type="entry name" value="DNA_Rcmb_RecR"/>
</dbReference>
<dbReference type="InterPro" id="IPR023627">
    <property type="entry name" value="Rcmb_RecR"/>
</dbReference>
<dbReference type="InterPro" id="IPR015967">
    <property type="entry name" value="Rcmb_RecR_Znf"/>
</dbReference>
<dbReference type="InterPro" id="IPR006171">
    <property type="entry name" value="TOPRIM_dom"/>
</dbReference>
<dbReference type="InterPro" id="IPR034137">
    <property type="entry name" value="TOPRIM_RecR"/>
</dbReference>
<dbReference type="NCBIfam" id="TIGR00615">
    <property type="entry name" value="recR"/>
    <property type="match status" value="1"/>
</dbReference>
<dbReference type="PANTHER" id="PTHR30446">
    <property type="entry name" value="RECOMBINATION PROTEIN RECR"/>
    <property type="match status" value="1"/>
</dbReference>
<dbReference type="PANTHER" id="PTHR30446:SF0">
    <property type="entry name" value="RECOMBINATION PROTEIN RECR"/>
    <property type="match status" value="1"/>
</dbReference>
<dbReference type="Pfam" id="PF21175">
    <property type="entry name" value="RecR_C"/>
    <property type="match status" value="1"/>
</dbReference>
<dbReference type="Pfam" id="PF21176">
    <property type="entry name" value="RecR_HhH"/>
    <property type="match status" value="1"/>
</dbReference>
<dbReference type="Pfam" id="PF02132">
    <property type="entry name" value="RecR_ZnF"/>
    <property type="match status" value="1"/>
</dbReference>
<dbReference type="Pfam" id="PF13662">
    <property type="entry name" value="Toprim_4"/>
    <property type="match status" value="1"/>
</dbReference>
<dbReference type="SMART" id="SM00493">
    <property type="entry name" value="TOPRIM"/>
    <property type="match status" value="1"/>
</dbReference>
<dbReference type="SUPFAM" id="SSF111304">
    <property type="entry name" value="Recombination protein RecR"/>
    <property type="match status" value="1"/>
</dbReference>
<dbReference type="PROSITE" id="PS01300">
    <property type="entry name" value="RECR"/>
    <property type="match status" value="1"/>
</dbReference>
<dbReference type="PROSITE" id="PS50880">
    <property type="entry name" value="TOPRIM"/>
    <property type="match status" value="1"/>
</dbReference>
<evidence type="ECO:0000255" key="1">
    <source>
        <dbReference type="HAMAP-Rule" id="MF_00017"/>
    </source>
</evidence>
<protein>
    <recommendedName>
        <fullName evidence="1">Recombination protein RecR</fullName>
    </recommendedName>
</protein>
<comment type="function">
    <text evidence="1">May play a role in DNA repair. It seems to be involved in an RecBC-independent recombinational process of DNA repair. It may act with RecF and RecO.</text>
</comment>
<comment type="similarity">
    <text evidence="1">Belongs to the RecR family.</text>
</comment>
<name>RECR_CLOAB</name>
<organism>
    <name type="scientific">Clostridium acetobutylicum (strain ATCC 824 / DSM 792 / JCM 1419 / IAM 19013 / LMG 5710 / NBRC 13948 / NRRL B-527 / VKM B-1787 / 2291 / W)</name>
    <dbReference type="NCBI Taxonomy" id="272562"/>
    <lineage>
        <taxon>Bacteria</taxon>
        <taxon>Bacillati</taxon>
        <taxon>Bacillota</taxon>
        <taxon>Clostridia</taxon>
        <taxon>Eubacteriales</taxon>
        <taxon>Clostridiaceae</taxon>
        <taxon>Clostridium</taxon>
    </lineage>
</organism>
<keyword id="KW-0227">DNA damage</keyword>
<keyword id="KW-0233">DNA recombination</keyword>
<keyword id="KW-0234">DNA repair</keyword>
<keyword id="KW-0479">Metal-binding</keyword>
<keyword id="KW-1185">Reference proteome</keyword>
<keyword id="KW-0862">Zinc</keyword>
<keyword id="KW-0863">Zinc-finger</keyword>
<proteinExistence type="inferred from homology"/>
<sequence length="198" mass="21773">MEFYPVAIEKLIEEFAKLPGVGYKTAQRLTMHVLNLPKEEVEGFADALKKARGTIKYCSVCGNYTDTDPCAICSNPNRDKSLVCVVEEPKDIISMEKVREFNGVYHVLHGVISPMLGKGPDSIKLRELVSRMNGKVKEVIVATNPNVDGEATAMYISKILKPLGVKVTRIAHGIPVGGDLEYADEVTLAKALEGRREI</sequence>
<reference key="1">
    <citation type="journal article" date="2001" name="J. Bacteriol.">
        <title>Genome sequence and comparative analysis of the solvent-producing bacterium Clostridium acetobutylicum.</title>
        <authorList>
            <person name="Noelling J."/>
            <person name="Breton G."/>
            <person name="Omelchenko M.V."/>
            <person name="Makarova K.S."/>
            <person name="Zeng Q."/>
            <person name="Gibson R."/>
            <person name="Lee H.M."/>
            <person name="Dubois J."/>
            <person name="Qiu D."/>
            <person name="Hitti J."/>
            <person name="Wolf Y.I."/>
            <person name="Tatusov R.L."/>
            <person name="Sabathe F."/>
            <person name="Doucette-Stamm L.A."/>
            <person name="Soucaille P."/>
            <person name="Daly M.J."/>
            <person name="Bennett G.N."/>
            <person name="Koonin E.V."/>
            <person name="Smith D.R."/>
        </authorList>
    </citation>
    <scope>NUCLEOTIDE SEQUENCE [LARGE SCALE GENOMIC DNA]</scope>
    <source>
        <strain>ATCC 824 / DSM 792 / JCM 1419 / IAM 19013 / LMG 5710 / NBRC 13948 / NRRL B-527 / VKM B-1787 / 2291 / W</strain>
    </source>
</reference>